<name>CREM_MOUSE</name>
<gene>
    <name type="primary">Crem</name>
</gene>
<proteinExistence type="evidence at protein level"/>
<accession>P27699</accession>
<accession>P27698</accession>
<accession>Q5XTP8</accession>
<accession>Q5XTP9</accession>
<accession>Q5XTQ0</accession>
<accession>Q5XTQ1</accession>
<accession>Q5XTQ2</accession>
<accession>Q5XTQ3</accession>
<accession>Q99JF1</accession>
<comment type="function">
    <text evidence="8">Transcriptional regulator that binds the cAMP response element (CRE), a sequence present in many viral and cellular promoters. Isoforms are either transcriptional activators or repressors. Isoform 2, isoform 3 and isoform 4 are repressors, while isoform 1 is an activator. Plays a role in spermatogenesis and is involved in spermatid maturation. Binding of isoform 1 (activator) to CRE is increased by CREB3L4. The CREM isoform 1-CREB3L4 heterodimer functions through CRE and may recruit HIRA to CRE to regulate histone exchange (PubMed:16595651).</text>
</comment>
<comment type="function">
    <molecule>Isoform 11</molecule>
    <text evidence="8 9">Plays a role in the regulation of the circadian clock: acts as a transcriptional repressor of the core circadian component PER1 by directly binding to cAMP response elements in its promoter.</text>
</comment>
<comment type="subunit">
    <text evidence="3 7 8 10">Binds DNA as a dimer (By similarity). Interacts with CDC34 (By similarity). Interacts with FHL5 (PubMed:10086359). May interact with TSSK4 (PubMed:26940607). Isoform 1 forms a heterodimer with CREB3L4 (PubMed:16595651).</text>
</comment>
<comment type="interaction">
    <interactant intactId="EBI-8744406">
        <id>P27699</id>
    </interactant>
    <interactant intactId="EBI-301912">
        <id>O09106</id>
        <label>Hdac1</label>
    </interactant>
    <organismsDiffer>false</organismsDiffer>
    <experiments>3</experiments>
</comment>
<comment type="subcellular location">
    <subcellularLocation>
        <location evidence="9 11">Nucleus</location>
    </subcellularLocation>
</comment>
<comment type="subcellular location">
    <molecule>Isoform 11</molecule>
    <subcellularLocation>
        <location>Cytoplasm</location>
    </subcellularLocation>
    <subcellularLocation>
        <location>Nucleus</location>
    </subcellularLocation>
</comment>
<comment type="alternative products">
    <event type="alternative promoter"/>
    <event type="alternative splicing"/>
    <isoform>
        <id>P27699-1</id>
        <name>1</name>
        <name>CREM-BCEFGgammaHIbeta</name>
        <name>Tau</name>
        <sequence type="displayed"/>
    </isoform>
    <isoform>
        <id>P27699-2</id>
        <name>2</name>
        <name>Alpha</name>
        <sequence type="described" ref="VSP_000602 VSP_000603 VSP_000604 VSP_000607"/>
    </isoform>
    <isoform>
        <id>P27699-3</id>
        <name>3</name>
        <name>Beta</name>
        <sequence type="described" ref="VSP_000602 VSP_000603 VSP_000604"/>
    </isoform>
    <isoform>
        <id>P27699-4</id>
        <name>4</name>
        <name>Gamma</name>
        <sequence type="described" ref="VSP_000602 VSP_000605 VSP_000606"/>
    </isoform>
    <isoform>
        <id>P27699-5</id>
        <name>5</name>
        <name>Tau Alpha Gamma</name>
        <sequence type="described" ref="VSP_038016 VSP_000607"/>
    </isoform>
    <isoform>
        <id>P27699-6</id>
        <name>6</name>
        <name>Tau 2 Alpha</name>
        <sequence type="described" ref="VSP_000602 VSP_000607"/>
    </isoform>
    <isoform>
        <id>P27699-7</id>
        <name>7</name>
        <name>Tau 1 Alpha</name>
        <sequence type="described" ref="VSP_000603 VSP_000604 VSP_000607"/>
    </isoform>
    <isoform>
        <id>P27699-8</id>
        <name>8</name>
        <name>Tau 1 Alpha Gamma</name>
        <sequence type="described" ref="VSP_000605 VSP_000606 VSP_000607"/>
    </isoform>
    <isoform>
        <id>P27699-9</id>
        <name>9</name>
        <name>Tau 1 Gamma</name>
        <sequence type="described" ref="VSP_000605 VSP_000606"/>
    </isoform>
    <isoform>
        <id>P27699-10</id>
        <name>10</name>
        <name>Alpha Gamma</name>
        <sequence type="described" ref="VSP_000602 VSP_000605 VSP_000606 VSP_000607"/>
    </isoform>
    <isoform>
        <id>P27699-11</id>
        <name>11</name>
        <name>Icer Gamma</name>
        <sequence type="described" ref="VSP_055987 VSP_000607"/>
    </isoform>
</comment>
<comment type="tissue specificity">
    <text evidence="10">Expressed in the testis.</text>
</comment>
<comment type="developmental stage">
    <text>In premeiotic germ cells, expressed at low amounts in the antagonist form. Subsequently, during spermatogenesis, isoform 1 (activator) is generated exclusively and in extremely high amounts.</text>
</comment>
<comment type="induction">
    <text evidence="9 11">Isoform 11 is expressed in a circadian manner in the adrenal gland with an expression peak at ZT20 (at protein level). It is induced by cAMP in an immediate-early fashion and can repress its own production via a negative autoregulatory mechanism.</text>
</comment>
<comment type="PTM">
    <text evidence="2 10">Stimulated by phosphorylation (By similarity). Phosphorylated on Ser-116 by TSSK4 in vitro.</text>
</comment>
<comment type="PTM">
    <text evidence="1">Ubiquitinated by CDC34 and RAD6B in order to be degraded by the proteasome.</text>
</comment>
<comment type="miscellaneous">
    <text>CREM-null deficient mice display male infertility: while spermatogonia differentiate normally into round spermatids, all the elongating spermatids are eliminated by apoptosis during spermiogenesis.</text>
</comment>
<comment type="miscellaneous">
    <molecule>Isoform 11</molecule>
    <text evidence="15">Produced by alternative promoter usage.</text>
</comment>
<comment type="similarity">
    <text evidence="15">Belongs to the bZIP family.</text>
</comment>
<comment type="sequence caution" evidence="15">
    <conflict type="erroneous initiation">
        <sequence resource="EMBL-CDS" id="AAA17495"/>
    </conflict>
    <text>Truncated N-terminus.</text>
</comment>
<comment type="sequence caution" evidence="15">
    <conflict type="erroneous initiation">
        <sequence resource="EMBL-CDS" id="AAA17496"/>
    </conflict>
    <text>Truncated N-terminus.</text>
</comment>
<comment type="sequence caution" evidence="15">
    <conflict type="erroneous initiation">
        <sequence resource="EMBL-CDS" id="AAA17497"/>
    </conflict>
    <text>Truncated N-terminus.</text>
</comment>
<comment type="sequence caution" evidence="15">
    <conflict type="erroneous initiation">
        <sequence resource="EMBL-CDS" id="AAV28551"/>
    </conflict>
    <text>Truncated N-terminus.</text>
</comment>
<comment type="sequence caution" evidence="15">
    <conflict type="erroneous initiation">
        <sequence resource="EMBL-CDS" id="AAV28552"/>
    </conflict>
    <text>Truncated N-terminus.</text>
</comment>
<comment type="sequence caution" evidence="15">
    <conflict type="erroneous initiation">
        <sequence resource="EMBL-CDS" id="AAV28553"/>
    </conflict>
    <text>Truncated N-terminus.</text>
</comment>
<comment type="sequence caution" evidence="15">
    <conflict type="erroneous initiation">
        <sequence resource="EMBL-CDS" id="AAV28554"/>
    </conflict>
    <text>Truncated N-terminus.</text>
</comment>
<comment type="sequence caution" evidence="15">
    <conflict type="erroneous initiation">
        <sequence resource="EMBL-CDS" id="AAV28555"/>
    </conflict>
    <text>Truncated N-terminus.</text>
</comment>
<comment type="sequence caution" evidence="15">
    <conflict type="erroneous initiation">
        <sequence resource="EMBL-CDS" id="AAV28556"/>
    </conflict>
    <text>Truncated N-terminus.</text>
</comment>
<evidence type="ECO:0000250" key="1"/>
<evidence type="ECO:0000250" key="2">
    <source>
        <dbReference type="UniProtKB" id="Q01147"/>
    </source>
</evidence>
<evidence type="ECO:0000250" key="3">
    <source>
        <dbReference type="UniProtKB" id="Q03060"/>
    </source>
</evidence>
<evidence type="ECO:0000255" key="4">
    <source>
        <dbReference type="PROSITE-ProRule" id="PRU00312"/>
    </source>
</evidence>
<evidence type="ECO:0000255" key="5">
    <source>
        <dbReference type="PROSITE-ProRule" id="PRU00978"/>
    </source>
</evidence>
<evidence type="ECO:0000256" key="6">
    <source>
        <dbReference type="SAM" id="MobiDB-lite"/>
    </source>
</evidence>
<evidence type="ECO:0000269" key="7">
    <source>
    </source>
</evidence>
<evidence type="ECO:0000269" key="8">
    <source>
    </source>
</evidence>
<evidence type="ECO:0000269" key="9">
    <source>
    </source>
</evidence>
<evidence type="ECO:0000269" key="10">
    <source>
    </source>
</evidence>
<evidence type="ECO:0000269" key="11">
    <source>
    </source>
</evidence>
<evidence type="ECO:0000303" key="12">
    <source>
    </source>
</evidence>
<evidence type="ECO:0000303" key="13">
    <source>
    </source>
</evidence>
<evidence type="ECO:0000303" key="14">
    <source>
    </source>
</evidence>
<evidence type="ECO:0000305" key="15"/>
<evidence type="ECO:0007744" key="16">
    <source>
    </source>
</evidence>
<sequence length="357" mass="38516">MSKCGRKKYMRTNVRQMTMETVESQQDRSVTRSVAEHSSAHMQTGQISVPTLAQVSVAGSGTGRGSPAVTLVQLPSGQTVQVQGVIQTPHPSVIQSPQIQTVQVATIAETDDSADSEVIDSHKRREILSRRPSYRKILNELSSDVPGIPKIEEEKSEEEGTPPNIATMAVPTSIYQTSTGQYIAIAQGGTIQISNPGSDGVQGLQALTMTNSGAPPPGATIVQYAAQSADGTQQFFVPGSQVVVQDEETDLAPSHMAAATGDMPTYQIRAPTTALPQGVVMAASPGSLHSPQQLAEEATRKRELRLMKNREAAKECRRRKKEYVKCLESRVAVLEVQNKKLIEELETLKDICSPKTD</sequence>
<feature type="chain" id="PRO_0000076608" description="cAMP-responsive element modulator">
    <location>
        <begin position="1"/>
        <end position="357"/>
    </location>
</feature>
<feature type="domain" description="KID" evidence="4">
    <location>
        <begin position="101"/>
        <end position="160"/>
    </location>
</feature>
<feature type="domain" description="bZIP" evidence="5">
    <location>
        <begin position="299"/>
        <end position="357"/>
    </location>
</feature>
<feature type="region of interest" description="Disordered" evidence="6">
    <location>
        <begin position="20"/>
        <end position="43"/>
    </location>
</feature>
<feature type="region of interest" description="Basic motif" evidence="5">
    <location>
        <begin position="300"/>
        <end position="325"/>
    </location>
</feature>
<feature type="region of interest" description="Leucine-zipper" evidence="5">
    <location>
        <begin position="327"/>
        <end position="348"/>
    </location>
</feature>
<feature type="compositionally biased region" description="Basic and acidic residues" evidence="6">
    <location>
        <begin position="25"/>
        <end position="39"/>
    </location>
</feature>
<feature type="modified residue" description="Phosphoserine" evidence="10">
    <location>
        <position position="116"/>
    </location>
</feature>
<feature type="modified residue" description="Phosphoserine" evidence="3">
    <location>
        <position position="142"/>
    </location>
</feature>
<feature type="modified residue" description="Phosphoserine" evidence="16">
    <location>
        <position position="284"/>
    </location>
</feature>
<feature type="modified residue" description="Phosphoserine" evidence="16">
    <location>
        <position position="287"/>
    </location>
</feature>
<feature type="modified residue" description="Phosphoserine" evidence="16">
    <location>
        <position position="290"/>
    </location>
</feature>
<feature type="splice variant" id="VSP_055987" description="In isoform 11." evidence="14">
    <original>MSKCGRKKYMRTNVRQMTMETVESQQDRSVTRSVAEHSSAHMQTGQISVPTLAQVSVAGSGTGRGSPAVTLVQLPSGQTVQVQGVIQTPHPSVIQSPQIQTVQVATIAETDDSADSEVIDSHKRREILSRRPSYRKILNELSSDVPGIPKIEEEKSEEEGTPPNIATMAVPTSIYQTSTGQYIAIAQGGTIQISNPGSDGVQGLQALTMTNSGAPPPGATIVQYAAQSADGTQQFFVPGSQVVVQ</original>
    <variation>MAVTGDET</variation>
    <location>
        <begin position="1"/>
        <end position="245"/>
    </location>
</feature>
<feature type="splice variant" id="VSP_000602" description="In isoform 2, isoform 3, isoform 4, isoform 6 and isoform 10." evidence="12 13">
    <location>
        <begin position="55"/>
        <end position="103"/>
    </location>
</feature>
<feature type="splice variant" id="VSP_000605" description="In isoform 4, isoform 8, isoform 9 and isoform 10." evidence="12 13">
    <location>
        <begin position="183"/>
        <end position="257"/>
    </location>
</feature>
<feature type="splice variant" id="VSP_000603" description="In isoform 2, isoform 3 and isoform 7." evidence="12 13">
    <location>
        <begin position="183"/>
        <end position="245"/>
    </location>
</feature>
<feature type="splice variant" id="VSP_038016" description="In isoform 5." evidence="12">
    <location>
        <begin position="246"/>
        <end position="257"/>
    </location>
</feature>
<feature type="splice variant" id="VSP_000604" description="In isoform 2, isoform 3 and isoform 7." evidence="12 13">
    <original>D</original>
    <variation>N</variation>
    <location>
        <position position="246"/>
    </location>
</feature>
<feature type="splice variant" id="VSP_000606" description="In isoform 4, isoform 8, isoform 9 and isoform 10." evidence="12 13">
    <original>A</original>
    <variation>T</variation>
    <location>
        <position position="258"/>
    </location>
</feature>
<feature type="splice variant" id="VSP_000607" description="In isoform 2, isoform 5, isoform 6, isoform 7, isoform 8, isoform 10 and isoform 11." evidence="12 13 14">
    <original>KECRRRKKEYVKCLESRVAVLEVQNKKLIEELETLKDICSPKTD</original>
    <variation>RECRRKKKEYVKCLENRVAVLENQNKTLIEELKALKDLYCHKAE</variation>
    <location>
        <begin position="314"/>
        <end position="357"/>
    </location>
</feature>
<feature type="mutagenesis site" description="Loss of in vitro phosphorylation by TSSK4." evidence="10">
    <original>S</original>
    <variation>M</variation>
    <location>
        <position position="116"/>
    </location>
</feature>
<protein>
    <recommendedName>
        <fullName>cAMP-responsive element modulator</fullName>
    </recommendedName>
    <alternativeName>
        <fullName>Inducible cAMP early repressor</fullName>
        <shortName>ICER</shortName>
    </alternativeName>
</protein>
<keyword id="KW-0010">Activator</keyword>
<keyword id="KW-0877">Alternative promoter usage</keyword>
<keyword id="KW-0025">Alternative splicing</keyword>
<keyword id="KW-0090">Biological rhythms</keyword>
<keyword id="KW-0963">Cytoplasm</keyword>
<keyword id="KW-0238">DNA-binding</keyword>
<keyword id="KW-0539">Nucleus</keyword>
<keyword id="KW-0597">Phosphoprotein</keyword>
<keyword id="KW-1185">Reference proteome</keyword>
<keyword id="KW-0678">Repressor</keyword>
<keyword id="KW-0804">Transcription</keyword>
<keyword id="KW-0805">Transcription regulation</keyword>
<keyword id="KW-0832">Ubl conjugation</keyword>
<dbReference type="EMBL" id="AJ311667">
    <property type="protein sequence ID" value="CAC34846.1"/>
    <property type="molecule type" value="mRNA"/>
</dbReference>
<dbReference type="EMBL" id="AC117589">
    <property type="status" value="NOT_ANNOTATED_CDS"/>
    <property type="molecule type" value="Genomic_DNA"/>
</dbReference>
<dbReference type="EMBL" id="M60285">
    <property type="protein sequence ID" value="AAA17495.1"/>
    <property type="status" value="ALT_INIT"/>
    <property type="molecule type" value="mRNA"/>
</dbReference>
<dbReference type="EMBL" id="M60285">
    <property type="protein sequence ID" value="AAA17496.1"/>
    <property type="status" value="ALT_INIT"/>
    <property type="molecule type" value="mRNA"/>
</dbReference>
<dbReference type="EMBL" id="M60285">
    <property type="protein sequence ID" value="AAA17497.1"/>
    <property type="status" value="ALT_INIT"/>
    <property type="molecule type" value="mRNA"/>
</dbReference>
<dbReference type="EMBL" id="AY738715">
    <property type="protein sequence ID" value="AAV28551.1"/>
    <property type="status" value="ALT_INIT"/>
    <property type="molecule type" value="mRNA"/>
</dbReference>
<dbReference type="EMBL" id="AY738716">
    <property type="protein sequence ID" value="AAV28552.1"/>
    <property type="status" value="ALT_INIT"/>
    <property type="molecule type" value="mRNA"/>
</dbReference>
<dbReference type="EMBL" id="AY738717">
    <property type="protein sequence ID" value="AAV28553.1"/>
    <property type="status" value="ALT_INIT"/>
    <property type="molecule type" value="mRNA"/>
</dbReference>
<dbReference type="EMBL" id="AY738718">
    <property type="protein sequence ID" value="AAV28554.1"/>
    <property type="status" value="ALT_INIT"/>
    <property type="molecule type" value="mRNA"/>
</dbReference>
<dbReference type="EMBL" id="AY738719">
    <property type="protein sequence ID" value="AAV28555.1"/>
    <property type="status" value="ALT_INIT"/>
    <property type="molecule type" value="mRNA"/>
</dbReference>
<dbReference type="EMBL" id="AY738721">
    <property type="protein sequence ID" value="AAV28556.1"/>
    <property type="status" value="ALT_INIT"/>
    <property type="molecule type" value="mRNA"/>
</dbReference>
<dbReference type="CCDS" id="CCDS29031.2">
    <molecule id="P27699-2"/>
</dbReference>
<dbReference type="CCDS" id="CCDS50214.1">
    <molecule id="P27699-7"/>
</dbReference>
<dbReference type="CCDS" id="CCDS50215.1">
    <molecule id="P27699-1"/>
</dbReference>
<dbReference type="CCDS" id="CCDS70862.1">
    <molecule id="P27699-6"/>
</dbReference>
<dbReference type="CCDS" id="CCDS70863.1">
    <molecule id="P27699-8"/>
</dbReference>
<dbReference type="CCDS" id="CCDS70864.1">
    <molecule id="P27699-5"/>
</dbReference>
<dbReference type="PIR" id="A37944">
    <property type="entry name" value="A37944"/>
</dbReference>
<dbReference type="PIR" id="B37944">
    <property type="entry name" value="B37944"/>
</dbReference>
<dbReference type="PIR" id="C37944">
    <property type="entry name" value="C37944"/>
</dbReference>
<dbReference type="PIR" id="S20827">
    <property type="entry name" value="S20827"/>
</dbReference>
<dbReference type="RefSeq" id="NP_001104320.1">
    <molecule id="P27699-10"/>
    <property type="nucleotide sequence ID" value="NM_001110850.2"/>
</dbReference>
<dbReference type="RefSeq" id="NP_001104324.2">
    <property type="nucleotide sequence ID" value="NM_001110854.1"/>
</dbReference>
<dbReference type="RefSeq" id="NP_001104325.2">
    <property type="nucleotide sequence ID" value="NM_001110855.1"/>
</dbReference>
<dbReference type="RefSeq" id="NP_001104326.1">
    <molecule id="P27699-7"/>
    <property type="nucleotide sequence ID" value="NM_001110856.2"/>
</dbReference>
<dbReference type="RefSeq" id="NP_001104327.1">
    <molecule id="P27699-3"/>
    <property type="nucleotide sequence ID" value="NM_001110857.2"/>
</dbReference>
<dbReference type="RefSeq" id="NP_001104328.1">
    <molecule id="P27699-4"/>
    <property type="nucleotide sequence ID" value="NM_001110858.2"/>
</dbReference>
<dbReference type="RefSeq" id="NP_001104329.1">
    <molecule id="P27699-1"/>
    <property type="nucleotide sequence ID" value="NM_001110859.2"/>
</dbReference>
<dbReference type="RefSeq" id="NP_001258432.1">
    <molecule id="P27699-9"/>
    <property type="nucleotide sequence ID" value="NM_001271503.1"/>
</dbReference>
<dbReference type="RefSeq" id="NP_001258433.1">
    <molecule id="P27699-8"/>
    <property type="nucleotide sequence ID" value="NM_001271504.1"/>
</dbReference>
<dbReference type="RefSeq" id="NP_001258434.1">
    <molecule id="P27699-6"/>
    <property type="nucleotide sequence ID" value="NM_001271505.1"/>
</dbReference>
<dbReference type="RefSeq" id="NP_001258435.1">
    <molecule id="P27699-5"/>
    <property type="nucleotide sequence ID" value="NM_001271506.1"/>
</dbReference>
<dbReference type="RefSeq" id="NP_038526.2">
    <molecule id="P27699-2"/>
    <property type="nucleotide sequence ID" value="NM_013498.3"/>
</dbReference>
<dbReference type="RefSeq" id="XP_006525618.1">
    <molecule id="P27699-1"/>
    <property type="nucleotide sequence ID" value="XM_006525555.5"/>
</dbReference>
<dbReference type="RefSeq" id="XP_006525619.1">
    <molecule id="P27699-5"/>
    <property type="nucleotide sequence ID" value="XM_006525556.4"/>
</dbReference>
<dbReference type="RefSeq" id="XP_006525624.1">
    <molecule id="P27699-6"/>
    <property type="nucleotide sequence ID" value="XM_006525561.5"/>
</dbReference>
<dbReference type="RefSeq" id="XP_006525628.1">
    <molecule id="P27699-7"/>
    <property type="nucleotide sequence ID" value="XM_006525565.5"/>
</dbReference>
<dbReference type="RefSeq" id="XP_006525630.1">
    <molecule id="P27699-8"/>
    <property type="nucleotide sequence ID" value="XM_006525567.4"/>
</dbReference>
<dbReference type="RefSeq" id="XP_006525631.1">
    <molecule id="P27699-9"/>
    <property type="nucleotide sequence ID" value="XM_006525568.5"/>
</dbReference>
<dbReference type="RefSeq" id="XP_006525636.1">
    <molecule id="P27699-2"/>
    <property type="nucleotide sequence ID" value="XM_006525573.4"/>
</dbReference>
<dbReference type="RefSeq" id="XP_006525637.1">
    <molecule id="P27699-3"/>
    <property type="nucleotide sequence ID" value="XM_006525574.4"/>
</dbReference>
<dbReference type="RefSeq" id="XP_006525638.1">
    <molecule id="P27699-10"/>
    <property type="nucleotide sequence ID" value="XM_006525575.4"/>
</dbReference>
<dbReference type="RefSeq" id="XP_006525639.1">
    <molecule id="P27699-4"/>
    <property type="nucleotide sequence ID" value="XM_006525576.4"/>
</dbReference>
<dbReference type="SMR" id="P27699"/>
<dbReference type="BioGRID" id="198877">
    <property type="interactions" value="6"/>
</dbReference>
<dbReference type="FunCoup" id="P27699">
    <property type="interactions" value="2415"/>
</dbReference>
<dbReference type="IntAct" id="P27699">
    <property type="interactions" value="3"/>
</dbReference>
<dbReference type="MINT" id="P27699"/>
<dbReference type="STRING" id="10090.ENSMUSP00000121233"/>
<dbReference type="iPTMnet" id="P27699"/>
<dbReference type="PhosphoSitePlus" id="P27699"/>
<dbReference type="PaxDb" id="10090-ENSMUSP00000121233"/>
<dbReference type="ProteomicsDB" id="284124">
    <molecule id="P27699-1"/>
</dbReference>
<dbReference type="ProteomicsDB" id="284125">
    <molecule id="P27699-2"/>
</dbReference>
<dbReference type="ProteomicsDB" id="284126">
    <molecule id="P27699-3"/>
</dbReference>
<dbReference type="ProteomicsDB" id="284127">
    <molecule id="P27699-4"/>
</dbReference>
<dbReference type="ProteomicsDB" id="284128">
    <molecule id="P27699-5"/>
</dbReference>
<dbReference type="ProteomicsDB" id="284129">
    <molecule id="P27699-6"/>
</dbReference>
<dbReference type="ProteomicsDB" id="284130">
    <molecule id="P27699-7"/>
</dbReference>
<dbReference type="ProteomicsDB" id="284131">
    <molecule id="P27699-8"/>
</dbReference>
<dbReference type="ProteomicsDB" id="284132">
    <molecule id="P27699-9"/>
</dbReference>
<dbReference type="ProteomicsDB" id="284133">
    <molecule id="P27699-10"/>
</dbReference>
<dbReference type="ProteomicsDB" id="284134">
    <molecule id="P27699-11"/>
</dbReference>
<dbReference type="Antibodypedia" id="4333">
    <property type="antibodies" value="435 antibodies from 35 providers"/>
</dbReference>
<dbReference type="DNASU" id="12916"/>
<dbReference type="Ensembl" id="ENSMUST00000025069.11">
    <molecule id="P27699-5"/>
    <property type="protein sequence ID" value="ENSMUSP00000025069.5"/>
    <property type="gene ID" value="ENSMUSG00000063889.17"/>
</dbReference>
<dbReference type="Ensembl" id="ENSMUST00000082141.12">
    <molecule id="P27699-6"/>
    <property type="protein sequence ID" value="ENSMUSP00000080780.6"/>
    <property type="gene ID" value="ENSMUSG00000063889.17"/>
</dbReference>
<dbReference type="Ensembl" id="ENSMUST00000150235.8">
    <molecule id="P27699-1"/>
    <property type="protein sequence ID" value="ENSMUSP00000121233.2"/>
    <property type="gene ID" value="ENSMUSG00000063889.17"/>
</dbReference>
<dbReference type="Ensembl" id="ENSMUST00000154135.8">
    <molecule id="P27699-2"/>
    <property type="protein sequence ID" value="ENSMUSP00000122051.2"/>
    <property type="gene ID" value="ENSMUSG00000063889.17"/>
</dbReference>
<dbReference type="Ensembl" id="ENSMUST00000154470.8">
    <molecule id="P27699-8"/>
    <property type="protein sequence ID" value="ENSMUSP00000118128.2"/>
    <property type="gene ID" value="ENSMUSG00000063889.17"/>
</dbReference>
<dbReference type="Ensembl" id="ENSMUST00000165086.8">
    <molecule id="P27699-7"/>
    <property type="protein sequence ID" value="ENSMUSP00000127353.2"/>
    <property type="gene ID" value="ENSMUSG00000063889.17"/>
</dbReference>
<dbReference type="GeneID" id="12916"/>
<dbReference type="KEGG" id="mmu:12916"/>
<dbReference type="UCSC" id="uc008dxp.2">
    <molecule id="P27699-8"/>
    <property type="organism name" value="mouse"/>
</dbReference>
<dbReference type="UCSC" id="uc008dxq.2">
    <molecule id="P27699-9"/>
    <property type="organism name" value="mouse"/>
</dbReference>
<dbReference type="UCSC" id="uc008dxr.2">
    <molecule id="P27699-5"/>
    <property type="organism name" value="mouse"/>
</dbReference>
<dbReference type="UCSC" id="uc008dxs.2">
    <molecule id="P27699-6"/>
    <property type="organism name" value="mouse"/>
</dbReference>
<dbReference type="UCSC" id="uc033hfn.1">
    <molecule id="P27699-1"/>
    <property type="organism name" value="mouse"/>
</dbReference>
<dbReference type="UCSC" id="uc033hfo.1">
    <molecule id="P27699-4"/>
    <property type="organism name" value="mouse"/>
</dbReference>
<dbReference type="UCSC" id="uc033hfp.1">
    <molecule id="P27699-7"/>
    <property type="organism name" value="mouse"/>
</dbReference>
<dbReference type="UCSC" id="uc033hfq.1">
    <molecule id="P27699-2"/>
    <property type="organism name" value="mouse"/>
</dbReference>
<dbReference type="UCSC" id="uc033hfr.1">
    <molecule id="P27699-3"/>
    <property type="organism name" value="mouse"/>
</dbReference>
<dbReference type="UCSC" id="uc033hfs.1">
    <molecule id="P27699-10"/>
    <property type="organism name" value="mouse"/>
</dbReference>
<dbReference type="AGR" id="MGI:88495"/>
<dbReference type="CTD" id="1390"/>
<dbReference type="MGI" id="MGI:88495">
    <property type="gene designation" value="Crem"/>
</dbReference>
<dbReference type="VEuPathDB" id="HostDB:ENSMUSG00000063889"/>
<dbReference type="eggNOG" id="KOG3584">
    <property type="taxonomic scope" value="Eukaryota"/>
</dbReference>
<dbReference type="GeneTree" id="ENSGT00940000156952"/>
<dbReference type="InParanoid" id="P27699"/>
<dbReference type="OMA" id="HEKTTER"/>
<dbReference type="OrthoDB" id="5970722at2759"/>
<dbReference type="PhylomeDB" id="P27699"/>
<dbReference type="TreeFam" id="TF106464"/>
<dbReference type="BioGRID-ORCS" id="12916">
    <property type="hits" value="2 hits in 74 CRISPR screens"/>
</dbReference>
<dbReference type="ChiTaRS" id="Crem">
    <property type="organism name" value="mouse"/>
</dbReference>
<dbReference type="PRO" id="PR:P27699"/>
<dbReference type="Proteomes" id="UP000000589">
    <property type="component" value="Chromosome 18"/>
</dbReference>
<dbReference type="RNAct" id="P27699">
    <property type="molecule type" value="protein"/>
</dbReference>
<dbReference type="Bgee" id="ENSMUSG00000063889">
    <property type="expression patterns" value="Expressed in spermatid and 232 other cell types or tissues"/>
</dbReference>
<dbReference type="ExpressionAtlas" id="P27699">
    <property type="expression patterns" value="baseline and differential"/>
</dbReference>
<dbReference type="GO" id="GO:0005737">
    <property type="term" value="C:cytoplasm"/>
    <property type="evidence" value="ECO:0000314"/>
    <property type="project" value="UniProtKB"/>
</dbReference>
<dbReference type="GO" id="GO:0016020">
    <property type="term" value="C:membrane"/>
    <property type="evidence" value="ECO:0007669"/>
    <property type="project" value="GOC"/>
</dbReference>
<dbReference type="GO" id="GO:0005634">
    <property type="term" value="C:nucleus"/>
    <property type="evidence" value="ECO:0000314"/>
    <property type="project" value="MGI"/>
</dbReference>
<dbReference type="GO" id="GO:0005667">
    <property type="term" value="C:transcription regulator complex"/>
    <property type="evidence" value="ECO:0000314"/>
    <property type="project" value="MGI"/>
</dbReference>
<dbReference type="GO" id="GO:0003677">
    <property type="term" value="F:DNA binding"/>
    <property type="evidence" value="ECO:0000314"/>
    <property type="project" value="MGI"/>
</dbReference>
<dbReference type="GO" id="GO:0001227">
    <property type="term" value="F:DNA-binding transcription repressor activity, RNA polymerase II-specific"/>
    <property type="evidence" value="ECO:0007669"/>
    <property type="project" value="Ensembl"/>
</dbReference>
<dbReference type="GO" id="GO:0000978">
    <property type="term" value="F:RNA polymerase II cis-regulatory region sequence-specific DNA binding"/>
    <property type="evidence" value="ECO:0000314"/>
    <property type="project" value="UniProtKB"/>
</dbReference>
<dbReference type="GO" id="GO:0000977">
    <property type="term" value="F:RNA polymerase II transcription regulatory region sequence-specific DNA binding"/>
    <property type="evidence" value="ECO:0007669"/>
    <property type="project" value="Ensembl"/>
</dbReference>
<dbReference type="GO" id="GO:0032922">
    <property type="term" value="P:circadian regulation of gene expression"/>
    <property type="evidence" value="ECO:0000315"/>
    <property type="project" value="UniProtKB"/>
</dbReference>
<dbReference type="GO" id="GO:0007623">
    <property type="term" value="P:circadian rhythm"/>
    <property type="evidence" value="ECO:0000270"/>
    <property type="project" value="UniProtKB"/>
</dbReference>
<dbReference type="GO" id="GO:0006687">
    <property type="term" value="P:glycosphingolipid metabolic process"/>
    <property type="evidence" value="ECO:0000315"/>
    <property type="project" value="MGI"/>
</dbReference>
<dbReference type="GO" id="GO:0045892">
    <property type="term" value="P:negative regulation of DNA-templated transcription"/>
    <property type="evidence" value="ECO:0000314"/>
    <property type="project" value="UniProtKB"/>
</dbReference>
<dbReference type="GO" id="GO:0045944">
    <property type="term" value="P:positive regulation of transcription by RNA polymerase II"/>
    <property type="evidence" value="ECO:0000316"/>
    <property type="project" value="MGI"/>
</dbReference>
<dbReference type="GO" id="GO:0051591">
    <property type="term" value="P:response to cAMP"/>
    <property type="evidence" value="ECO:0000314"/>
    <property type="project" value="UniProtKB"/>
</dbReference>
<dbReference type="GO" id="GO:0048511">
    <property type="term" value="P:rhythmic process"/>
    <property type="evidence" value="ECO:0007669"/>
    <property type="project" value="UniProtKB-KW"/>
</dbReference>
<dbReference type="GO" id="GO:0007283">
    <property type="term" value="P:spermatogenesis"/>
    <property type="evidence" value="ECO:0000315"/>
    <property type="project" value="MGI"/>
</dbReference>
<dbReference type="CDD" id="cd14690">
    <property type="entry name" value="bZIP_CREB1"/>
    <property type="match status" value="1"/>
</dbReference>
<dbReference type="FunFam" id="1.20.5.170:FF:000003">
    <property type="entry name" value="cAMP-responsive element modulator isoform X2"/>
    <property type="match status" value="1"/>
</dbReference>
<dbReference type="Gene3D" id="1.20.5.170">
    <property type="match status" value="1"/>
</dbReference>
<dbReference type="InterPro" id="IPR004827">
    <property type="entry name" value="bZIP"/>
</dbReference>
<dbReference type="InterPro" id="IPR046347">
    <property type="entry name" value="bZIP_sf"/>
</dbReference>
<dbReference type="InterPro" id="IPR003102">
    <property type="entry name" value="CREB1-like_pKID"/>
</dbReference>
<dbReference type="InterPro" id="IPR001630">
    <property type="entry name" value="Leuzip_CREB"/>
</dbReference>
<dbReference type="PANTHER" id="PTHR45879:SF4">
    <property type="entry name" value="CAMP-RESPONSIVE ELEMENT MODULATOR"/>
    <property type="match status" value="1"/>
</dbReference>
<dbReference type="PANTHER" id="PTHR45879">
    <property type="entry name" value="CYCLIC AMP RESPONSE ELEMENT-BINDING PROTEIN B"/>
    <property type="match status" value="1"/>
</dbReference>
<dbReference type="Pfam" id="PF00170">
    <property type="entry name" value="bZIP_1"/>
    <property type="match status" value="1"/>
</dbReference>
<dbReference type="Pfam" id="PF02173">
    <property type="entry name" value="pKID"/>
    <property type="match status" value="1"/>
</dbReference>
<dbReference type="PRINTS" id="PR00041">
    <property type="entry name" value="LEUZIPPRCREB"/>
</dbReference>
<dbReference type="SMART" id="SM00338">
    <property type="entry name" value="BRLZ"/>
    <property type="match status" value="1"/>
</dbReference>
<dbReference type="SUPFAM" id="SSF57959">
    <property type="entry name" value="Leucine zipper domain"/>
    <property type="match status" value="1"/>
</dbReference>
<dbReference type="PROSITE" id="PS50217">
    <property type="entry name" value="BZIP"/>
    <property type="match status" value="1"/>
</dbReference>
<dbReference type="PROSITE" id="PS00036">
    <property type="entry name" value="BZIP_BASIC"/>
    <property type="match status" value="1"/>
</dbReference>
<dbReference type="PROSITE" id="PS50953">
    <property type="entry name" value="KID"/>
    <property type="match status" value="1"/>
</dbReference>
<reference key="1">
    <citation type="journal article" date="1993" name="Cell">
        <title>Inducibility and negative autoregulation of CREM: an alternative promoter directs the expression of ICER, an early response repressor.</title>
        <authorList>
            <person name="Molina C.A."/>
            <person name="Foulkes N.S."/>
            <person name="Lalli E."/>
            <person name="Sassone-Corsi P."/>
        </authorList>
    </citation>
    <scope>NUCLEOTIDE SEQUENCE [MRNA] (ISOFORM 11)</scope>
    <scope>ALTERNATIVE PROMOTER USAGE</scope>
    <scope>SUBCELLULAR LOCATION</scope>
    <scope>INDUCTION</scope>
</reference>
<reference key="2">
    <citation type="journal article" date="2009" name="PLoS Biol.">
        <title>Lineage-specific biology revealed by a finished genome assembly of the mouse.</title>
        <authorList>
            <person name="Church D.M."/>
            <person name="Goodstadt L."/>
            <person name="Hillier L.W."/>
            <person name="Zody M.C."/>
            <person name="Goldstein S."/>
            <person name="She X."/>
            <person name="Bult C.J."/>
            <person name="Agarwala R."/>
            <person name="Cherry J.L."/>
            <person name="DiCuccio M."/>
            <person name="Hlavina W."/>
            <person name="Kapustin Y."/>
            <person name="Meric P."/>
            <person name="Maglott D."/>
            <person name="Birtle Z."/>
            <person name="Marques A.C."/>
            <person name="Graves T."/>
            <person name="Zhou S."/>
            <person name="Teague B."/>
            <person name="Potamousis K."/>
            <person name="Churas C."/>
            <person name="Place M."/>
            <person name="Herschleb J."/>
            <person name="Runnheim R."/>
            <person name="Forrest D."/>
            <person name="Amos-Landgraf J."/>
            <person name="Schwartz D.C."/>
            <person name="Cheng Z."/>
            <person name="Lindblad-Toh K."/>
            <person name="Eichler E.E."/>
            <person name="Ponting C.P."/>
        </authorList>
    </citation>
    <scope>NUCLEOTIDE SEQUENCE [LARGE SCALE GENOMIC DNA]</scope>
    <source>
        <strain>C57BL/6J</strain>
    </source>
</reference>
<reference key="3">
    <citation type="journal article" date="1991" name="Cell">
        <title>CREM gene: use of alternative DNA-binding domains generates multiple antagonists of cAMP-induced transcription.</title>
        <authorList>
            <person name="Foulkes N.S."/>
            <person name="Borrelli E."/>
            <person name="Sassone-Corsi P."/>
        </authorList>
    </citation>
    <scope>NUCLEOTIDE SEQUENCE [MRNA] OF 7-357 (ISOFORMS 2; 3 AND 4)</scope>
</reference>
<reference key="4">
    <citation type="journal article" date="2005" name="Calcif. Tissue Int.">
        <title>Identification of novel cAMP responsive element modulator (CREM) isoforms expressed by osteoblasts.</title>
        <authorList>
            <person name="Liu F."/>
            <person name="Huang Y.-F."/>
            <person name="Kream B.E."/>
        </authorList>
    </citation>
    <scope>NUCLEOTIDE SEQUENCE [MRNA] OF 11-357 (ISOFORMS 5; 6; 7; 8; 9 AND 10)</scope>
    <source>
        <tissue>Osteoblast</tissue>
    </source>
</reference>
<reference key="5">
    <citation type="journal article" date="1992" name="Nature">
        <title>Developmental switch of CREM function during spermatogenesis: from antagonist to activator.</title>
        <authorList>
            <person name="Foulkes N.S."/>
            <person name="Mellstroem B."/>
            <person name="Benusiglio E."/>
            <person name="Sassone-Corsi P."/>
        </authorList>
    </citation>
    <scope>NUCLEOTIDE SEQUENCE [MRNA] OF 17-357 (ISOFORM 1)</scope>
</reference>
<reference key="6">
    <citation type="journal article" date="1999" name="Nature">
        <title>CBP-independent activation of CREM and CREB by the LIM-only protein ACT.</title>
        <authorList>
            <person name="Fimia G.M."/>
            <person name="De Cesare D."/>
            <person name="Sassone-Corsi P."/>
        </authorList>
    </citation>
    <scope>INTERACTION WITH FHL5</scope>
</reference>
<reference key="7">
    <citation type="journal article" date="2006" name="J. Biol. Chem.">
        <title>Transcription factors, cAMP-responsive element modulator (CREM) and Tisp40, act in concert in postmeiotic transcriptional regulation.</title>
        <authorList>
            <person name="Nagamori I."/>
            <person name="Yomogida K."/>
            <person name="Adams P.D."/>
            <person name="Sassone-Corsi P."/>
            <person name="Nojima H."/>
        </authorList>
    </citation>
    <scope>FUNCTION</scope>
    <scope>INTERACTION WITH CREB3L4</scope>
</reference>
<reference key="8">
    <citation type="journal article" date="2010" name="Cell">
        <title>A tissue-specific atlas of mouse protein phosphorylation and expression.</title>
        <authorList>
            <person name="Huttlin E.L."/>
            <person name="Jedrychowski M.P."/>
            <person name="Elias J.E."/>
            <person name="Goswami T."/>
            <person name="Rad R."/>
            <person name="Beausoleil S.A."/>
            <person name="Villen J."/>
            <person name="Haas W."/>
            <person name="Sowa M.E."/>
            <person name="Gygi S.P."/>
        </authorList>
    </citation>
    <scope>PHOSPHORYLATION [LARGE SCALE ANALYSIS] AT SER-284; SER-287 AND SER-290</scope>
    <scope>IDENTIFICATION BY MASS SPECTROMETRY [LARGE SCALE ANALYSIS]</scope>
    <source>
        <tissue>Testis</tissue>
    </source>
</reference>
<reference key="9">
    <citation type="journal article" date="2013" name="J. Biol. Chem.">
        <title>Inducible cAMP early repressor regulates the Period 1 gene of the hepatic and adrenal clocks.</title>
        <authorList>
            <person name="Zmrzljak U.P."/>
            <person name="Korencic A."/>
            <person name="Kosir R."/>
            <person name="Golicnik M."/>
            <person name="Sassone-Corsi P."/>
            <person name="Rozman D."/>
        </authorList>
    </citation>
    <scope>FUNCTION (ISOFORM 11)</scope>
    <scope>ALTERNATIVE PROMOTER USAGE</scope>
    <scope>SUBCELLULAR LOCATION</scope>
    <scope>INDUCTION</scope>
</reference>
<reference key="10">
    <citation type="journal article" date="2016" name="Biosci. Biotechnol. Biochem.">
        <title>Phosphorylated testis-specific serine/threonine kinase 4 may phosphorylate Crem at Ser-117.</title>
        <authorList>
            <person name="Fu G."/>
            <person name="Wei Y."/>
            <person name="Wang X."/>
            <person name="Yu L."/>
        </authorList>
    </citation>
    <scope>INTERACTION WITH TSSK4</scope>
    <scope>TISSUE SPECIFICITY</scope>
    <scope>PHOSPHORYLATION AT SER-116</scope>
    <scope>MUTAGENESIS OF SER-116</scope>
</reference>
<organism>
    <name type="scientific">Mus musculus</name>
    <name type="common">Mouse</name>
    <dbReference type="NCBI Taxonomy" id="10090"/>
    <lineage>
        <taxon>Eukaryota</taxon>
        <taxon>Metazoa</taxon>
        <taxon>Chordata</taxon>
        <taxon>Craniata</taxon>
        <taxon>Vertebrata</taxon>
        <taxon>Euteleostomi</taxon>
        <taxon>Mammalia</taxon>
        <taxon>Eutheria</taxon>
        <taxon>Euarchontoglires</taxon>
        <taxon>Glires</taxon>
        <taxon>Rodentia</taxon>
        <taxon>Myomorpha</taxon>
        <taxon>Muroidea</taxon>
        <taxon>Muridae</taxon>
        <taxon>Murinae</taxon>
        <taxon>Mus</taxon>
        <taxon>Mus</taxon>
    </lineage>
</organism>